<evidence type="ECO:0000305" key="1"/>
<reference key="1">
    <citation type="submission" date="2006-10" db="EMBL/GenBank/DDBJ databases">
        <authorList>
            <consortium name="NIH - Zebrafish Gene Collection (ZGC) project"/>
        </authorList>
    </citation>
    <scope>NUCLEOTIDE SEQUENCE [LARGE SCALE MRNA]</scope>
    <source>
        <tissue>Brain</tissue>
    </source>
</reference>
<feature type="chain" id="PRO_0000392203" description="Isochorismatase domain-containing protein 2">
    <location>
        <begin position="1"/>
        <end position="197"/>
    </location>
</feature>
<keyword id="KW-1185">Reference proteome</keyword>
<dbReference type="EMBL" id="BC125848">
    <property type="protein sequence ID" value="AAI25849.1"/>
    <property type="molecule type" value="mRNA"/>
</dbReference>
<dbReference type="RefSeq" id="NP_001073422.2">
    <property type="nucleotide sequence ID" value="NM_001079953.2"/>
</dbReference>
<dbReference type="SMR" id="A0JME6"/>
<dbReference type="FunCoup" id="A0JME6">
    <property type="interactions" value="174"/>
</dbReference>
<dbReference type="STRING" id="7955.ENSDARP00000022030"/>
<dbReference type="PaxDb" id="7955-ENSDARP00000022030"/>
<dbReference type="PeptideAtlas" id="A0JME6"/>
<dbReference type="Ensembl" id="ENSDART00000007842">
    <property type="protein sequence ID" value="ENSDARP00000022030"/>
    <property type="gene ID" value="ENSDARG00000013371"/>
</dbReference>
<dbReference type="Ensembl" id="ENSDART00000178291">
    <property type="protein sequence ID" value="ENSDARP00000143811"/>
    <property type="gene ID" value="ENSDARG00000013371"/>
</dbReference>
<dbReference type="GeneID" id="492617"/>
<dbReference type="KEGG" id="dre:492617"/>
<dbReference type="AGR" id="ZFIN:ZDB-GENE-070518-1"/>
<dbReference type="CTD" id="79763"/>
<dbReference type="ZFIN" id="ZDB-GENE-070518-1">
    <property type="gene designation" value="isoc2"/>
</dbReference>
<dbReference type="eggNOG" id="KOG4044">
    <property type="taxonomic scope" value="Eukaryota"/>
</dbReference>
<dbReference type="InParanoid" id="A0JME6"/>
<dbReference type="OMA" id="HVCVFQT"/>
<dbReference type="OrthoDB" id="269496at2759"/>
<dbReference type="PhylomeDB" id="A0JME6"/>
<dbReference type="TreeFam" id="TF313459"/>
<dbReference type="PRO" id="PR:A0JME6"/>
<dbReference type="Proteomes" id="UP000000437">
    <property type="component" value="Chromosome 16"/>
</dbReference>
<dbReference type="Bgee" id="ENSDARG00000013371">
    <property type="expression patterns" value="Expressed in liver and 23 other cell types or tissues"/>
</dbReference>
<dbReference type="ExpressionAtlas" id="A0JME6">
    <property type="expression patterns" value="baseline and differential"/>
</dbReference>
<dbReference type="GO" id="GO:0005737">
    <property type="term" value="C:cytoplasm"/>
    <property type="evidence" value="ECO:0000318"/>
    <property type="project" value="GO_Central"/>
</dbReference>
<dbReference type="CDD" id="cd01012">
    <property type="entry name" value="YcaC_related"/>
    <property type="match status" value="1"/>
</dbReference>
<dbReference type="FunFam" id="3.40.50.850:FF:000001">
    <property type="entry name" value="Isochorismatase domain-containing protein 1"/>
    <property type="match status" value="1"/>
</dbReference>
<dbReference type="Gene3D" id="3.40.50.850">
    <property type="entry name" value="Isochorismatase-like"/>
    <property type="match status" value="1"/>
</dbReference>
<dbReference type="InterPro" id="IPR000868">
    <property type="entry name" value="Isochorismatase-like_dom"/>
</dbReference>
<dbReference type="InterPro" id="IPR036380">
    <property type="entry name" value="Isochorismatase-like_sf"/>
</dbReference>
<dbReference type="InterPro" id="IPR050993">
    <property type="entry name" value="Isochorismatase_domain"/>
</dbReference>
<dbReference type="PANTHER" id="PTHR14119">
    <property type="entry name" value="HYDROLASE"/>
    <property type="match status" value="1"/>
</dbReference>
<dbReference type="PANTHER" id="PTHR14119:SF3">
    <property type="entry name" value="ISOCHORISMATASE DOMAIN-CONTAINING PROTEIN 2"/>
    <property type="match status" value="1"/>
</dbReference>
<dbReference type="Pfam" id="PF00857">
    <property type="entry name" value="Isochorismatase"/>
    <property type="match status" value="1"/>
</dbReference>
<dbReference type="SUPFAM" id="SSF52499">
    <property type="entry name" value="Isochorismatase-like hydrolases"/>
    <property type="match status" value="1"/>
</dbReference>
<protein>
    <recommendedName>
        <fullName>Isochorismatase domain-containing protein 2</fullName>
    </recommendedName>
</protein>
<gene>
    <name type="primary">isoc2</name>
    <name type="ORF">zgc:109735</name>
</gene>
<sequence length="197" mass="21491">MAGIGRLSTKGSVLLLCDMQEKFRPTIFQFTNVVSNAARLLQACRILNIPQILTEQYPKGLGPTVPELGAEGLKPHTKTSFSMMTESVQSSLKSMGDPQQVILCGIEAQACIACTAYDLLERGMEVHIVADAVSSRSQTDRLFALSRLRQSGVFLNTTEGVLLQLVQDAKHPNFKEIQKLLAHPSPDTGLLAFFSSL</sequence>
<name>ISOC2_DANRE</name>
<proteinExistence type="evidence at transcript level"/>
<comment type="similarity">
    <text evidence="1">Belongs to the isochorismatase family.</text>
</comment>
<accession>A0JME6</accession>
<organism>
    <name type="scientific">Danio rerio</name>
    <name type="common">Zebrafish</name>
    <name type="synonym">Brachydanio rerio</name>
    <dbReference type="NCBI Taxonomy" id="7955"/>
    <lineage>
        <taxon>Eukaryota</taxon>
        <taxon>Metazoa</taxon>
        <taxon>Chordata</taxon>
        <taxon>Craniata</taxon>
        <taxon>Vertebrata</taxon>
        <taxon>Euteleostomi</taxon>
        <taxon>Actinopterygii</taxon>
        <taxon>Neopterygii</taxon>
        <taxon>Teleostei</taxon>
        <taxon>Ostariophysi</taxon>
        <taxon>Cypriniformes</taxon>
        <taxon>Danionidae</taxon>
        <taxon>Danioninae</taxon>
        <taxon>Danio</taxon>
    </lineage>
</organism>